<organism>
    <name type="scientific">Saccharomyces cerevisiae (strain AWRI1631)</name>
    <name type="common">Baker's yeast</name>
    <dbReference type="NCBI Taxonomy" id="545124"/>
    <lineage>
        <taxon>Eukaryota</taxon>
        <taxon>Fungi</taxon>
        <taxon>Dikarya</taxon>
        <taxon>Ascomycota</taxon>
        <taxon>Saccharomycotina</taxon>
        <taxon>Saccharomycetes</taxon>
        <taxon>Saccharomycetales</taxon>
        <taxon>Saccharomycetaceae</taxon>
        <taxon>Saccharomyces</taxon>
    </lineage>
</organism>
<evidence type="ECO:0000250" key="1">
    <source>
        <dbReference type="UniProtKB" id="Q92328"/>
    </source>
</evidence>
<evidence type="ECO:0000255" key="2">
    <source>
        <dbReference type="HAMAP-Rule" id="MF_03104"/>
    </source>
</evidence>
<feature type="chain" id="PRO_0000384309" description="Mitochondrial distribution and morphology protein 12">
    <location>
        <begin position="1"/>
        <end position="271"/>
    </location>
</feature>
<feature type="domain" description="SMP-LTD" evidence="2">
    <location>
        <begin position="1"/>
        <end position="267"/>
    </location>
</feature>
<feature type="cross-link" description="Glycyl lysine isopeptide (Lys-Gly) (interchain with G-Cter in ubiquitin)" evidence="1">
    <location>
        <position position="49"/>
    </location>
</feature>
<proteinExistence type="inferred from homology"/>
<accession>B5VRP4</accession>
<comment type="function">
    <text evidence="2">Component of the ERMES/MDM complex, which serves as a molecular tether to connect the endoplasmic reticulum (ER) and mitochondria. Components of this complex are involved in the control of mitochondrial shape and protein biogenesis, and function in nonvesicular lipid trafficking between the ER and mitochondria. MDM12 is required for the interaction of the ER-resident membrane protein MMM1 and the outer mitochondrial membrane-resident beta-barrel protein MDM10. The MDM12-MMM1 subcomplex functions in the major beta-barrel assembly pathway that is responsible for biogenesis of all mitochondrial outer membrane beta-barrel proteins, and acts in a late step after the SAM complex. The MDM10-MDM12-MMM1 subcomplex further acts in the TOM40-specific pathway after the action of the MDM12-MMM1 complex. Essential for establishing and maintaining the structure of mitochondria and maintenance of mtDNA nucleoids.</text>
</comment>
<comment type="subunit">
    <text evidence="2">Component of the ER-mitochondria encounter structure (ERMES) or MDM complex, composed of MMM1, MDM10, MDM12 and MDM34. A MMM1 homodimer associates with one molecule of MDM12 on each side in a pairwise head-to-tail manner, and the SMP-LTD domains of MMM1 and MDM12 generate a continuous hydrophobic tunnel for phospholipid trafficking. Interacts with PUF3.</text>
</comment>
<comment type="subcellular location">
    <subcellularLocation>
        <location evidence="2">Mitochondrion outer membrane</location>
        <topology evidence="2">Peripheral membrane protein</topology>
        <orientation evidence="2">Cytoplasmic side</orientation>
    </subcellularLocation>
    <subcellularLocation>
        <location evidence="2">Endoplasmic reticulum membrane</location>
        <topology evidence="2">Peripheral membrane protein</topology>
        <orientation evidence="2">Cytoplasmic side</orientation>
    </subcellularLocation>
    <text evidence="2">The ERMES/MDM complex localizes to a few discrete foci (around 10 per single cell), that represent mitochondria-endoplasmic reticulum junctions. These foci are often found next to mtDNA nucleoids.</text>
</comment>
<comment type="domain">
    <text evidence="2">The SMP-LTD domain is a barrel-like domain that can bind various types of glycerophospholipids in its interior and mediate their transfer between two adjacent bilayers.</text>
</comment>
<comment type="similarity">
    <text evidence="2">Belongs to the MDM12 family.</text>
</comment>
<protein>
    <recommendedName>
        <fullName evidence="2">Mitochondrial distribution and morphology protein 12</fullName>
    </recommendedName>
    <alternativeName>
        <fullName evidence="2">Mitochondrial inheritance component MDM12</fullName>
    </alternativeName>
</protein>
<reference key="1">
    <citation type="journal article" date="2008" name="FEMS Yeast Res.">
        <title>Comparative genome analysis of a Saccharomyces cerevisiae wine strain.</title>
        <authorList>
            <person name="Borneman A.R."/>
            <person name="Forgan A.H."/>
            <person name="Pretorius I.S."/>
            <person name="Chambers P.J."/>
        </authorList>
    </citation>
    <scope>NUCLEOTIDE SEQUENCE [LARGE SCALE GENOMIC DNA]</scope>
    <source>
        <strain>AWRI1631</strain>
    </source>
</reference>
<dbReference type="EMBL" id="ABSV01002122">
    <property type="protein sequence ID" value="EDZ69399.1"/>
    <property type="molecule type" value="Genomic_DNA"/>
</dbReference>
<dbReference type="SMR" id="B5VRP4"/>
<dbReference type="Proteomes" id="UP000008988">
    <property type="component" value="Unassembled WGS sequence"/>
</dbReference>
<dbReference type="GO" id="GO:0005789">
    <property type="term" value="C:endoplasmic reticulum membrane"/>
    <property type="evidence" value="ECO:0007669"/>
    <property type="project" value="UniProtKB-SubCell"/>
</dbReference>
<dbReference type="GO" id="GO:0032865">
    <property type="term" value="C:ERMES complex"/>
    <property type="evidence" value="ECO:0007669"/>
    <property type="project" value="UniProtKB-UniRule"/>
</dbReference>
<dbReference type="GO" id="GO:0008289">
    <property type="term" value="F:lipid binding"/>
    <property type="evidence" value="ECO:0007669"/>
    <property type="project" value="UniProtKB-KW"/>
</dbReference>
<dbReference type="GO" id="GO:0000002">
    <property type="term" value="P:mitochondrial genome maintenance"/>
    <property type="evidence" value="ECO:0007669"/>
    <property type="project" value="UniProtKB-UniRule"/>
</dbReference>
<dbReference type="GO" id="GO:1990456">
    <property type="term" value="P:mitochondrion-endoplasmic reticulum membrane tethering"/>
    <property type="evidence" value="ECO:0007669"/>
    <property type="project" value="TreeGrafter"/>
</dbReference>
<dbReference type="GO" id="GO:0015914">
    <property type="term" value="P:phospholipid transport"/>
    <property type="evidence" value="ECO:0007669"/>
    <property type="project" value="TreeGrafter"/>
</dbReference>
<dbReference type="GO" id="GO:0045040">
    <property type="term" value="P:protein insertion into mitochondrial outer membrane"/>
    <property type="evidence" value="ECO:0007669"/>
    <property type="project" value="UniProtKB-UniRule"/>
</dbReference>
<dbReference type="CDD" id="cd21672">
    <property type="entry name" value="SMP_Mdm12"/>
    <property type="match status" value="1"/>
</dbReference>
<dbReference type="HAMAP" id="MF_03104">
    <property type="entry name" value="Mdm12"/>
    <property type="match status" value="1"/>
</dbReference>
<dbReference type="InterPro" id="IPR027532">
    <property type="entry name" value="Mdm12"/>
</dbReference>
<dbReference type="InterPro" id="IPR031468">
    <property type="entry name" value="SMP_LBD"/>
</dbReference>
<dbReference type="PANTHER" id="PTHR28204">
    <property type="entry name" value="MITOCHONDRIAL DISTRIBUTION AND MORPHOLOGY PROTEIN 12"/>
    <property type="match status" value="1"/>
</dbReference>
<dbReference type="PANTHER" id="PTHR28204:SF1">
    <property type="entry name" value="MITOCHONDRIAL DISTRIBUTION AND MORPHOLOGY PROTEIN 12"/>
    <property type="match status" value="1"/>
</dbReference>
<dbReference type="PROSITE" id="PS51847">
    <property type="entry name" value="SMP"/>
    <property type="match status" value="1"/>
</dbReference>
<gene>
    <name evidence="2" type="primary">MDM12</name>
    <name type="ORF">AWRI1631_151520</name>
</gene>
<name>MDM12_YEAS6</name>
<keyword id="KW-0256">Endoplasmic reticulum</keyword>
<keyword id="KW-1017">Isopeptide bond</keyword>
<keyword id="KW-0445">Lipid transport</keyword>
<keyword id="KW-0446">Lipid-binding</keyword>
<keyword id="KW-0472">Membrane</keyword>
<keyword id="KW-0496">Mitochondrion</keyword>
<keyword id="KW-1000">Mitochondrion outer membrane</keyword>
<keyword id="KW-0813">Transport</keyword>
<keyword id="KW-0832">Ubl conjugation</keyword>
<sequence>MSFDINWSTLESDNRLNDLIRKHLNSYLQNTQLPSYVSNLRVLDFDLGKVGPAITLKEITDPLDEFYDSIREEADQETEENNDNKEDSEHICPDRTIANHEGPKDDFEAPVVMPSPNDIQFLLEVEYKGDLLVTIGADLVLNYPVEKFMTLPVKLSISDIGLHSLCIVACLSKQLFLSFLCDVSDPALDDNQTVLDPKGPILAATKPLERISIVRSMKIETEIGEQYQGQGSVLRSVGELEQFLFTIFKDFLRKELAWPSWINLDFNDGDE</sequence>